<name>OPSD_COTGR</name>
<comment type="function">
    <text evidence="1 2 3">Photoreceptor required for image-forming vision at low light intensity. While most salt water fish species use retinal as chromophore, most freshwater fish use 3-dehydroretinal, or a mixture of retinal and 3-dehydroretinal (By similarity). Light-induced isomerization of 11-cis to all-trans retinal triggers a conformational change that activates signaling via G-proteins. Subsequent receptor phosphorylation mediates displacement of the bound G-protein alpha subunit by arrestin and terminates signaling (By similarity).</text>
</comment>
<comment type="subcellular location">
    <subcellularLocation>
        <location evidence="2">Membrane</location>
        <topology evidence="2">Multi-pass membrane protein</topology>
    </subcellularLocation>
    <subcellularLocation>
        <location evidence="4">Cell projection</location>
        <location evidence="4">Cilium</location>
        <location evidence="4">Photoreceptor outer segment</location>
    </subcellularLocation>
    <text evidence="2">Synthesized in the inner segment (IS) of rod photoreceptor cells before vectorial transport to disk membranes in the rod outer segment (OS) photosensory cilia.</text>
</comment>
<comment type="PTM">
    <text evidence="1">Phosphorylated on some or all of the serine and threonine residues present in the C-terminal region.</text>
</comment>
<comment type="PTM">
    <text evidence="1">Contains one covalently linked retinal chromophore.</text>
</comment>
<comment type="similarity">
    <text evidence="6">Belongs to the G-protein coupled receptor 1 family. Opsin subfamily.</text>
</comment>
<reference key="1">
    <citation type="journal article" date="1997" name="Mol. Phylogenet. Evol.">
        <title>Molecular evolution of the cottoid fish endemic to Lake Baikal deduced from nuclear DNA evidence.</title>
        <authorList>
            <person name="Hunt D.M."/>
            <person name="Fitzgibbon J."/>
            <person name="Slobodyanyuk S.J."/>
            <person name="Bowmaker J.K."/>
            <person name="Dulai K.S."/>
        </authorList>
    </citation>
    <scope>NUCLEOTIDE SEQUENCE [GENOMIC DNA]</scope>
</reference>
<gene>
    <name type="primary">rho</name>
</gene>
<accession>O42328</accession>
<keyword id="KW-0966">Cell projection</keyword>
<keyword id="KW-0157">Chromophore</keyword>
<keyword id="KW-1015">Disulfide bond</keyword>
<keyword id="KW-0297">G-protein coupled receptor</keyword>
<keyword id="KW-0325">Glycoprotein</keyword>
<keyword id="KW-0449">Lipoprotein</keyword>
<keyword id="KW-0472">Membrane</keyword>
<keyword id="KW-0564">Palmitate</keyword>
<keyword id="KW-0597">Phosphoprotein</keyword>
<keyword id="KW-0600">Photoreceptor protein</keyword>
<keyword id="KW-0675">Receptor</keyword>
<keyword id="KW-0681">Retinal protein</keyword>
<keyword id="KW-0716">Sensory transduction</keyword>
<keyword id="KW-0807">Transducer</keyword>
<keyword id="KW-0812">Transmembrane</keyword>
<keyword id="KW-1133">Transmembrane helix</keyword>
<keyword id="KW-0844">Vision</keyword>
<organism>
    <name type="scientific">Cottocomephorus grewingkii</name>
    <name type="common">Baikal yellowfin</name>
    <name type="synonym">Cottus grewingkii</name>
    <dbReference type="NCBI Taxonomy" id="57734"/>
    <lineage>
        <taxon>Eukaryota</taxon>
        <taxon>Metazoa</taxon>
        <taxon>Chordata</taxon>
        <taxon>Craniata</taxon>
        <taxon>Vertebrata</taxon>
        <taxon>Euteleostomi</taxon>
        <taxon>Actinopterygii</taxon>
        <taxon>Neopterygii</taxon>
        <taxon>Teleostei</taxon>
        <taxon>Neoteleostei</taxon>
        <taxon>Acanthomorphata</taxon>
        <taxon>Eupercaria</taxon>
        <taxon>Perciformes</taxon>
        <taxon>Cottioidei</taxon>
        <taxon>Cottales</taxon>
        <taxon>Cottidae</taxon>
        <taxon>Cottocomephorus</taxon>
    </lineage>
</organism>
<proteinExistence type="inferred from homology"/>
<protein>
    <recommendedName>
        <fullName>Rhodopsin</fullName>
    </recommendedName>
</protein>
<sequence length="289" mass="32703">YLVNPAAYAAPGAYMFLLILVGFPVNFLTLYVTLEHKKLRTPLNYILLNLAVADLFMVLGGFTTTMYTSMHGYFVLGRLGCNLEGFFATLGGEIALWSLVVLAIERWIVVCKPISNFRFTEDHAIMGLAFSWVMALTCAVPPLVGWSRYIPEGMQCSCGVDYYTRAEGFNNESFVIYMFIVHFLIPLSNNFFCYGRLLCAVKEAAAAQQESETTQRAEREVSRMVVMMVVSFLMCWLPYASVAWYIFCNQGSEFGPIFMTLPAFFAKSSAIYNPLIYICMNKHVRHCMI</sequence>
<evidence type="ECO:0000250" key="1">
    <source>
        <dbReference type="UniProtKB" id="P02699"/>
    </source>
</evidence>
<evidence type="ECO:0000250" key="2">
    <source>
        <dbReference type="UniProtKB" id="P08100"/>
    </source>
</evidence>
<evidence type="ECO:0000250" key="3">
    <source>
        <dbReference type="UniProtKB" id="P32309"/>
    </source>
</evidence>
<evidence type="ECO:0000250" key="4">
    <source>
        <dbReference type="UniProtKB" id="P35359"/>
    </source>
</evidence>
<evidence type="ECO:0000255" key="5"/>
<evidence type="ECO:0000255" key="6">
    <source>
        <dbReference type="PROSITE-ProRule" id="PRU00521"/>
    </source>
</evidence>
<evidence type="ECO:0000305" key="7"/>
<dbReference type="EMBL" id="U97265">
    <property type="protein sequence ID" value="AAB61719.1"/>
    <property type="molecule type" value="Genomic_DNA"/>
</dbReference>
<dbReference type="SMR" id="O42328"/>
<dbReference type="GlyCosmos" id="O42328">
    <property type="glycosylation" value="1 site, No reported glycans"/>
</dbReference>
<dbReference type="GO" id="GO:0016020">
    <property type="term" value="C:membrane"/>
    <property type="evidence" value="ECO:0000250"/>
    <property type="project" value="UniProtKB"/>
</dbReference>
<dbReference type="GO" id="GO:0097381">
    <property type="term" value="C:photoreceptor disc membrane"/>
    <property type="evidence" value="ECO:0000250"/>
    <property type="project" value="UniProtKB"/>
</dbReference>
<dbReference type="GO" id="GO:0005886">
    <property type="term" value="C:plasma membrane"/>
    <property type="evidence" value="ECO:0000250"/>
    <property type="project" value="UniProtKB"/>
</dbReference>
<dbReference type="GO" id="GO:0005502">
    <property type="term" value="F:11-cis retinal binding"/>
    <property type="evidence" value="ECO:0000250"/>
    <property type="project" value="UniProtKB"/>
</dbReference>
<dbReference type="GO" id="GO:0008020">
    <property type="term" value="F:G protein-coupled photoreceptor activity"/>
    <property type="evidence" value="ECO:0000250"/>
    <property type="project" value="UniProtKB"/>
</dbReference>
<dbReference type="GO" id="GO:0016038">
    <property type="term" value="P:absorption of visible light"/>
    <property type="evidence" value="ECO:0000250"/>
    <property type="project" value="UniProtKB"/>
</dbReference>
<dbReference type="GO" id="GO:0016056">
    <property type="term" value="P:G protein-coupled opsin signaling pathway"/>
    <property type="evidence" value="ECO:0000250"/>
    <property type="project" value="UniProtKB"/>
</dbReference>
<dbReference type="GO" id="GO:0007601">
    <property type="term" value="P:visual perception"/>
    <property type="evidence" value="ECO:0007669"/>
    <property type="project" value="UniProtKB-KW"/>
</dbReference>
<dbReference type="FunFam" id="1.20.1070.10:FF:000357">
    <property type="entry name" value="Rhodopsin"/>
    <property type="match status" value="1"/>
</dbReference>
<dbReference type="Gene3D" id="1.20.1070.10">
    <property type="entry name" value="Rhodopsin 7-helix transmembrane proteins"/>
    <property type="match status" value="1"/>
</dbReference>
<dbReference type="InterPro" id="IPR050125">
    <property type="entry name" value="GPCR_opsins"/>
</dbReference>
<dbReference type="InterPro" id="IPR000276">
    <property type="entry name" value="GPCR_Rhodpsn"/>
</dbReference>
<dbReference type="InterPro" id="IPR017452">
    <property type="entry name" value="GPCR_Rhodpsn_7TM"/>
</dbReference>
<dbReference type="InterPro" id="IPR001760">
    <property type="entry name" value="Opsin"/>
</dbReference>
<dbReference type="InterPro" id="IPR027430">
    <property type="entry name" value="Retinal_BS"/>
</dbReference>
<dbReference type="InterPro" id="IPR000732">
    <property type="entry name" value="Rhodopsin"/>
</dbReference>
<dbReference type="PANTHER" id="PTHR24240">
    <property type="entry name" value="OPSIN"/>
    <property type="match status" value="1"/>
</dbReference>
<dbReference type="Pfam" id="PF00001">
    <property type="entry name" value="7tm_1"/>
    <property type="match status" value="1"/>
</dbReference>
<dbReference type="PRINTS" id="PR00237">
    <property type="entry name" value="GPCRRHODOPSN"/>
</dbReference>
<dbReference type="PRINTS" id="PR00238">
    <property type="entry name" value="OPSIN"/>
</dbReference>
<dbReference type="PRINTS" id="PR00579">
    <property type="entry name" value="RHODOPSIN"/>
</dbReference>
<dbReference type="SUPFAM" id="SSF81321">
    <property type="entry name" value="Family A G protein-coupled receptor-like"/>
    <property type="match status" value="1"/>
</dbReference>
<dbReference type="PROSITE" id="PS00237">
    <property type="entry name" value="G_PROTEIN_RECEP_F1_1"/>
    <property type="match status" value="1"/>
</dbReference>
<dbReference type="PROSITE" id="PS50262">
    <property type="entry name" value="G_PROTEIN_RECEP_F1_2"/>
    <property type="match status" value="1"/>
</dbReference>
<dbReference type="PROSITE" id="PS00238">
    <property type="entry name" value="OPSIN"/>
    <property type="match status" value="1"/>
</dbReference>
<feature type="chain" id="PRO_0000197664" description="Rhodopsin">
    <location>
        <begin position="1" status="less than"/>
        <end position="289" status="greater than"/>
    </location>
</feature>
<feature type="topological domain" description="Extracellular" evidence="7">
    <location>
        <begin position="1" status="less than"/>
        <end position="7"/>
    </location>
</feature>
<feature type="transmembrane region" description="Helical; Name=1" evidence="1">
    <location>
        <begin position="8"/>
        <end position="32"/>
    </location>
</feature>
<feature type="topological domain" description="Cytoplasmic" evidence="7">
    <location>
        <begin position="33"/>
        <end position="44"/>
    </location>
</feature>
<feature type="transmembrane region" description="Helical; Name=2" evidence="1">
    <location>
        <begin position="45"/>
        <end position="67"/>
    </location>
</feature>
<feature type="topological domain" description="Extracellular" evidence="7">
    <location>
        <begin position="68"/>
        <end position="81"/>
    </location>
</feature>
<feature type="transmembrane region" description="Helical; Name=3" evidence="1">
    <location>
        <begin position="82"/>
        <end position="104"/>
    </location>
</feature>
<feature type="topological domain" description="Cytoplasmic" evidence="7">
    <location>
        <begin position="105"/>
        <end position="123"/>
    </location>
</feature>
<feature type="transmembrane region" description="Helical; Name=4" evidence="1">
    <location>
        <begin position="124"/>
        <end position="144"/>
    </location>
</feature>
<feature type="topological domain" description="Extracellular" evidence="7">
    <location>
        <begin position="145"/>
        <end position="173"/>
    </location>
</feature>
<feature type="transmembrane region" description="Helical; Name=5" evidence="1">
    <location>
        <begin position="174"/>
        <end position="195"/>
    </location>
</feature>
<feature type="topological domain" description="Cytoplasmic" evidence="7">
    <location>
        <begin position="196"/>
        <end position="223"/>
    </location>
</feature>
<feature type="transmembrane region" description="Helical; Name=6" evidence="1">
    <location>
        <begin position="224"/>
        <end position="245"/>
    </location>
</feature>
<feature type="topological domain" description="Extracellular" evidence="7">
    <location>
        <begin position="246"/>
        <end position="257"/>
    </location>
</feature>
<feature type="transmembrane region" description="Helical; Name=7" evidence="1">
    <location>
        <begin position="258"/>
        <end position="279"/>
    </location>
</feature>
<feature type="topological domain" description="Cytoplasmic" evidence="7">
    <location>
        <begin position="280"/>
        <end position="289" status="greater than"/>
    </location>
</feature>
<feature type="short sequence motif" description="'Ionic lock' involved in activated form stabilization" evidence="1">
    <location>
        <begin position="105"/>
        <end position="107"/>
    </location>
</feature>
<feature type="site" description="Plays an important role in the conformation switch to the active conformation" evidence="1">
    <location>
        <position position="84"/>
    </location>
</feature>
<feature type="modified residue" description="N6-(retinylidene)lysine" evidence="1">
    <location>
        <position position="267"/>
    </location>
</feature>
<feature type="glycosylation site" description="N-linked (GlcNAc...) asparagine" evidence="5">
    <location>
        <position position="171"/>
    </location>
</feature>
<feature type="disulfide bond" evidence="6">
    <location>
        <begin position="81"/>
        <end position="158"/>
    </location>
</feature>
<feature type="non-terminal residue">
    <location>
        <position position="1"/>
    </location>
</feature>
<feature type="non-terminal residue">
    <location>
        <position position="289"/>
    </location>
</feature>